<name>PRIL_THEKO</name>
<keyword id="KW-0004">4Fe-4S</keyword>
<keyword id="KW-0235">DNA replication</keyword>
<keyword id="KW-0408">Iron</keyword>
<keyword id="KW-0411">Iron-sulfur</keyword>
<keyword id="KW-0479">Metal-binding</keyword>
<keyword id="KW-0639">Primosome</keyword>
<keyword id="KW-1185">Reference proteome</keyword>
<comment type="function">
    <text evidence="1 2">Regulatory subunit of DNA primase, an RNA polymerase that catalyzes the synthesis of short RNA molecules used as primers for DNA polymerase during DNA replication. Stabilizes and modulates the activity of the small subunit, increasing the rate of DNA synthesis, and conferring RNA synthesis capability. The DNA polymerase activity may enable DNA primase to also catalyze primer extension after primer synthesis. May also play a role in DNA repair.</text>
</comment>
<comment type="cofactor">
    <cofactor evidence="3">
        <name>[4Fe-4S] cluster</name>
        <dbReference type="ChEBI" id="CHEBI:49883"/>
    </cofactor>
    <text evidence="3">Binds 1 [4Fe-4S] cluster.</text>
</comment>
<comment type="subunit">
    <text evidence="1 2">Heterodimer of a small subunit (PriS) and a large subunit (PriL).</text>
</comment>
<comment type="similarity">
    <text evidence="1">Belongs to the eukaryotic-type primase large subunit family.</text>
</comment>
<reference key="1">
    <citation type="journal article" date="2005" name="Genome Res.">
        <title>Complete genome sequence of the hyperthermophilic archaeon Thermococcus kodakaraensis KOD1 and comparison with Pyrococcus genomes.</title>
        <authorList>
            <person name="Fukui T."/>
            <person name="Atomi H."/>
            <person name="Kanai T."/>
            <person name="Matsumi R."/>
            <person name="Fujiwara S."/>
            <person name="Imanaka T."/>
        </authorList>
    </citation>
    <scope>NUCLEOTIDE SEQUENCE [LARGE SCALE GENOMIC DNA]</scope>
    <source>
        <strain>ATCC BAA-918 / JCM 12380 / KOD1</strain>
    </source>
</reference>
<reference key="2">
    <citation type="journal article" date="2012" name="J. Biol. Chem.">
        <title>Characterization of DNA primase complex isolated from the archaeon, Thermococcus kodakaraensis.</title>
        <authorList>
            <person name="Chemnitz Galal W."/>
            <person name="Pan M."/>
            <person name="Kelman Z."/>
            <person name="Hurwitz J."/>
        </authorList>
    </citation>
    <scope>FUNCTION AS A PRIMASE</scope>
    <scope>COFACTOR</scope>
    <scope>SUBUNIT</scope>
</reference>
<feature type="chain" id="PRO_0000424554" description="DNA primase large subunit PriL">
    <location>
        <begin position="1"/>
        <end position="400"/>
    </location>
</feature>
<feature type="binding site" evidence="1">
    <location>
        <position position="247"/>
    </location>
    <ligand>
        <name>[4Fe-4S] cluster</name>
        <dbReference type="ChEBI" id="CHEBI:49883"/>
    </ligand>
</feature>
<feature type="binding site" evidence="1">
    <location>
        <position position="356"/>
    </location>
    <ligand>
        <name>[4Fe-4S] cluster</name>
        <dbReference type="ChEBI" id="CHEBI:49883"/>
    </ligand>
</feature>
<feature type="binding site" evidence="1">
    <location>
        <position position="367"/>
    </location>
    <ligand>
        <name>[4Fe-4S] cluster</name>
        <dbReference type="ChEBI" id="CHEBI:49883"/>
    </ligand>
</feature>
<feature type="binding site" evidence="1">
    <location>
        <position position="373"/>
    </location>
    <ligand>
        <name>[4Fe-4S] cluster</name>
        <dbReference type="ChEBI" id="CHEBI:49883"/>
    </ligand>
</feature>
<sequence length="400" mass="46524">MLDPFGKRAESLIREEFGDLLALLERVPSAISVEEPISLVSWMLESENPPQELVEVDNLEELRDLFKFYALLGAASISPYGLEAEVVKRATLRLYSERIKASKNLSETMLPVVPVGENEIPHNDLNILERRMDRNLSPEEKEKLKIKYKIPIKDLLNLWGSSLKEVYIRNGYAYLRWETALKMWEKAFEKRFERAVNILYEYRDELPEFYHRLREKLEEIAEEYFKERGEMFKGTASPLRFDLFPPCVKEALKGVPAGMRNYAITVLLTSFLSYARICPNPPKKDVRIKDCINDLKIIEEEILPVIIEAGNRCKPPLFEDQPHEIKNIWYHLGFGLTDSPTMEDSGNSTWYFPPNCDKIRANAPQLCKPDKYCRGIKNPLSYYLKRLYLEGKKKEGETSE</sequence>
<dbReference type="EMBL" id="AP006878">
    <property type="protein sequence ID" value="BAD85979.1"/>
    <property type="molecule type" value="Genomic_DNA"/>
</dbReference>
<dbReference type="RefSeq" id="WP_011250741.1">
    <property type="nucleotide sequence ID" value="NC_006624.1"/>
</dbReference>
<dbReference type="SMR" id="Q5JJ73"/>
<dbReference type="STRING" id="69014.TK1790"/>
<dbReference type="EnsemblBacteria" id="BAD85979">
    <property type="protein sequence ID" value="BAD85979"/>
    <property type="gene ID" value="TK1790"/>
</dbReference>
<dbReference type="GeneID" id="78448320"/>
<dbReference type="KEGG" id="tko:TK1790"/>
<dbReference type="PATRIC" id="fig|69014.16.peg.1746"/>
<dbReference type="eggNOG" id="arCOG03013">
    <property type="taxonomic scope" value="Archaea"/>
</dbReference>
<dbReference type="HOGENOM" id="CLU_691913_0_0_2"/>
<dbReference type="InParanoid" id="Q5JJ73"/>
<dbReference type="OrthoDB" id="46081at2157"/>
<dbReference type="PhylomeDB" id="Q5JJ73"/>
<dbReference type="BRENDA" id="2.7.7.B16">
    <property type="organism ID" value="5246"/>
</dbReference>
<dbReference type="Proteomes" id="UP000000536">
    <property type="component" value="Chromosome"/>
</dbReference>
<dbReference type="GO" id="GO:1990077">
    <property type="term" value="C:primosome complex"/>
    <property type="evidence" value="ECO:0007669"/>
    <property type="project" value="UniProtKB-KW"/>
</dbReference>
<dbReference type="GO" id="GO:0051539">
    <property type="term" value="F:4 iron, 4 sulfur cluster binding"/>
    <property type="evidence" value="ECO:0007669"/>
    <property type="project" value="UniProtKB-UniRule"/>
</dbReference>
<dbReference type="GO" id="GO:0003899">
    <property type="term" value="F:DNA-directed RNA polymerase activity"/>
    <property type="evidence" value="ECO:0007669"/>
    <property type="project" value="InterPro"/>
</dbReference>
<dbReference type="GO" id="GO:0046872">
    <property type="term" value="F:metal ion binding"/>
    <property type="evidence" value="ECO:0007669"/>
    <property type="project" value="UniProtKB-KW"/>
</dbReference>
<dbReference type="GO" id="GO:0006269">
    <property type="term" value="P:DNA replication, synthesis of primer"/>
    <property type="evidence" value="ECO:0007669"/>
    <property type="project" value="UniProtKB-UniRule"/>
</dbReference>
<dbReference type="CDD" id="cd06560">
    <property type="entry name" value="PriL"/>
    <property type="match status" value="1"/>
</dbReference>
<dbReference type="Gene3D" id="1.20.930.50">
    <property type="match status" value="1"/>
</dbReference>
<dbReference type="Gene3D" id="3.30.200.260">
    <property type="match status" value="1"/>
</dbReference>
<dbReference type="HAMAP" id="MF_00701">
    <property type="entry name" value="DNA_primase_lrg_arc"/>
    <property type="match status" value="1"/>
</dbReference>
<dbReference type="InterPro" id="IPR007238">
    <property type="entry name" value="DNA_primase_lsu_euk/arc"/>
</dbReference>
<dbReference type="InterPro" id="IPR023642">
    <property type="entry name" value="DNA_primase_lsu_PriL"/>
</dbReference>
<dbReference type="NCBIfam" id="NF003051">
    <property type="entry name" value="PRK03968.1"/>
    <property type="match status" value="1"/>
</dbReference>
<dbReference type="Pfam" id="PF04104">
    <property type="entry name" value="DNA_primase_lrg"/>
    <property type="match status" value="1"/>
</dbReference>
<dbReference type="SUPFAM" id="SSF140914">
    <property type="entry name" value="PriB N-terminal domain-like"/>
    <property type="match status" value="1"/>
</dbReference>
<protein>
    <recommendedName>
        <fullName evidence="1">DNA primase large subunit PriL</fullName>
    </recommendedName>
</protein>
<organism>
    <name type="scientific">Thermococcus kodakarensis (strain ATCC BAA-918 / JCM 12380 / KOD1)</name>
    <name type="common">Pyrococcus kodakaraensis (strain KOD1)</name>
    <dbReference type="NCBI Taxonomy" id="69014"/>
    <lineage>
        <taxon>Archaea</taxon>
        <taxon>Methanobacteriati</taxon>
        <taxon>Methanobacteriota</taxon>
        <taxon>Thermococci</taxon>
        <taxon>Thermococcales</taxon>
        <taxon>Thermococcaceae</taxon>
        <taxon>Thermococcus</taxon>
    </lineage>
</organism>
<accession>Q5JJ73</accession>
<evidence type="ECO:0000255" key="1">
    <source>
        <dbReference type="HAMAP-Rule" id="MF_00701"/>
    </source>
</evidence>
<evidence type="ECO:0000269" key="2">
    <source>
    </source>
</evidence>
<evidence type="ECO:0000305" key="3">
    <source>
    </source>
</evidence>
<gene>
    <name evidence="1" type="primary">priL</name>
    <name type="ordered locus">TK1790</name>
</gene>
<proteinExistence type="evidence at protein level"/>